<name>ZN830_XENLA</name>
<protein>
    <recommendedName>
        <fullName evidence="2">Zinc finger protein 830</fullName>
    </recommendedName>
    <alternativeName>
        <fullName evidence="2">Coiled-coil domain-containing protein 16</fullName>
    </alternativeName>
</protein>
<comment type="function">
    <text evidence="1">May act as an important regulator of the cell cycle that participates in the maintenance of genome integrity.</text>
</comment>
<comment type="subcellular location">
    <subcellularLocation>
        <location evidence="1">Nucleus</location>
    </subcellularLocation>
    <subcellularLocation>
        <location evidence="1">Chromosome</location>
    </subcellularLocation>
    <subcellularLocation>
        <location evidence="1">Nucleus speckle</location>
    </subcellularLocation>
    <text evidence="1">Excluded from nucleolus.</text>
</comment>
<gene>
    <name evidence="2" type="primary">znf830</name>
    <name evidence="2" type="synonym">ccdc16</name>
</gene>
<organism>
    <name type="scientific">Xenopus laevis</name>
    <name type="common">African clawed frog</name>
    <dbReference type="NCBI Taxonomy" id="8355"/>
    <lineage>
        <taxon>Eukaryota</taxon>
        <taxon>Metazoa</taxon>
        <taxon>Chordata</taxon>
        <taxon>Craniata</taxon>
        <taxon>Vertebrata</taxon>
        <taxon>Euteleostomi</taxon>
        <taxon>Amphibia</taxon>
        <taxon>Batrachia</taxon>
        <taxon>Anura</taxon>
        <taxon>Pipoidea</taxon>
        <taxon>Pipidae</taxon>
        <taxon>Xenopodinae</taxon>
        <taxon>Xenopus</taxon>
        <taxon>Xenopus</taxon>
    </lineage>
</organism>
<keyword id="KW-0131">Cell cycle</keyword>
<keyword id="KW-0132">Cell division</keyword>
<keyword id="KW-0158">Chromosome</keyword>
<keyword id="KW-0175">Coiled coil</keyword>
<keyword id="KW-0217">Developmental protein</keyword>
<keyword id="KW-0479">Metal-binding</keyword>
<keyword id="KW-0498">Mitosis</keyword>
<keyword id="KW-0539">Nucleus</keyword>
<keyword id="KW-1185">Reference proteome</keyword>
<keyword id="KW-0862">Zinc</keyword>
<keyword id="KW-0863">Zinc-finger</keyword>
<reference key="1">
    <citation type="submission" date="2004-09" db="EMBL/GenBank/DDBJ databases">
        <authorList>
            <consortium name="NIH - Xenopus Gene Collection (XGC) project"/>
        </authorList>
    </citation>
    <scope>NUCLEOTIDE SEQUENCE [LARGE SCALE MRNA]</scope>
    <source>
        <tissue>Brain</tissue>
    </source>
</reference>
<feature type="chain" id="PRO_0000076197" description="Zinc finger protein 830">
    <location>
        <begin position="1"/>
        <end position="356"/>
    </location>
</feature>
<feature type="zinc finger region" description="C2H2-type">
    <location>
        <begin position="47"/>
        <end position="69"/>
    </location>
</feature>
<feature type="region of interest" description="Disordered" evidence="4">
    <location>
        <begin position="71"/>
        <end position="195"/>
    </location>
</feature>
<feature type="coiled-coil region" evidence="3">
    <location>
        <begin position="11"/>
        <end position="33"/>
    </location>
</feature>
<feature type="coiled-coil region" evidence="3">
    <location>
        <begin position="278"/>
        <end position="322"/>
    </location>
</feature>
<feature type="compositionally biased region" description="Polar residues" evidence="4">
    <location>
        <begin position="80"/>
        <end position="90"/>
    </location>
</feature>
<feature type="compositionally biased region" description="Basic and acidic residues" evidence="4">
    <location>
        <begin position="99"/>
        <end position="118"/>
    </location>
</feature>
<feature type="compositionally biased region" description="Basic and acidic residues" evidence="4">
    <location>
        <begin position="125"/>
        <end position="135"/>
    </location>
</feature>
<feature type="compositionally biased region" description="Acidic residues" evidence="4">
    <location>
        <begin position="150"/>
        <end position="165"/>
    </location>
</feature>
<proteinExistence type="evidence at transcript level"/>
<accession>Q63ZM9</accession>
<evidence type="ECO:0000250" key="1">
    <source>
        <dbReference type="UniProtKB" id="Q8R1N0"/>
    </source>
</evidence>
<evidence type="ECO:0000250" key="2">
    <source>
        <dbReference type="UniProtKB" id="Q96NB3"/>
    </source>
</evidence>
<evidence type="ECO:0000255" key="3"/>
<evidence type="ECO:0000256" key="4">
    <source>
        <dbReference type="SAM" id="MobiDB-lite"/>
    </source>
</evidence>
<dbReference type="EMBL" id="BC082883">
    <property type="protein sequence ID" value="AAH82883.1"/>
    <property type="molecule type" value="mRNA"/>
</dbReference>
<dbReference type="RefSeq" id="NP_001088076.1">
    <property type="nucleotide sequence ID" value="NM_001094607.1"/>
</dbReference>
<dbReference type="SMR" id="Q63ZM9"/>
<dbReference type="DNASU" id="494773"/>
<dbReference type="GeneID" id="494773"/>
<dbReference type="KEGG" id="xla:494773"/>
<dbReference type="AGR" id="Xenbase:XB-GENE-6255314"/>
<dbReference type="CTD" id="494773"/>
<dbReference type="Xenbase" id="XB-GENE-6255314">
    <property type="gene designation" value="znf830.S"/>
</dbReference>
<dbReference type="OMA" id="KQPPDAQ"/>
<dbReference type="OrthoDB" id="77607at2759"/>
<dbReference type="Proteomes" id="UP000186698">
    <property type="component" value="Chromosome 6S"/>
</dbReference>
<dbReference type="Bgee" id="494773">
    <property type="expression patterns" value="Expressed in blastula and 19 other cell types or tissues"/>
</dbReference>
<dbReference type="GO" id="GO:0005694">
    <property type="term" value="C:chromosome"/>
    <property type="evidence" value="ECO:0007669"/>
    <property type="project" value="UniProtKB-SubCell"/>
</dbReference>
<dbReference type="GO" id="GO:0016607">
    <property type="term" value="C:nuclear speck"/>
    <property type="evidence" value="ECO:0007669"/>
    <property type="project" value="UniProtKB-SubCell"/>
</dbReference>
<dbReference type="GO" id="GO:0005634">
    <property type="term" value="C:nucleus"/>
    <property type="evidence" value="ECO:0000318"/>
    <property type="project" value="GO_Central"/>
</dbReference>
<dbReference type="GO" id="GO:0005681">
    <property type="term" value="C:spliceosomal complex"/>
    <property type="evidence" value="ECO:0007669"/>
    <property type="project" value="InterPro"/>
</dbReference>
<dbReference type="GO" id="GO:0003676">
    <property type="term" value="F:nucleic acid binding"/>
    <property type="evidence" value="ECO:0007669"/>
    <property type="project" value="InterPro"/>
</dbReference>
<dbReference type="GO" id="GO:0008270">
    <property type="term" value="F:zinc ion binding"/>
    <property type="evidence" value="ECO:0007669"/>
    <property type="project" value="UniProtKB-KW"/>
</dbReference>
<dbReference type="GO" id="GO:0051301">
    <property type="term" value="P:cell division"/>
    <property type="evidence" value="ECO:0007669"/>
    <property type="project" value="UniProtKB-KW"/>
</dbReference>
<dbReference type="GO" id="GO:0044773">
    <property type="term" value="P:mitotic DNA damage checkpoint signaling"/>
    <property type="evidence" value="ECO:0000318"/>
    <property type="project" value="GO_Central"/>
</dbReference>
<dbReference type="GO" id="GO:0033314">
    <property type="term" value="P:mitotic DNA replication checkpoint signaling"/>
    <property type="evidence" value="ECO:0000318"/>
    <property type="project" value="GO_Central"/>
</dbReference>
<dbReference type="GO" id="GO:0033260">
    <property type="term" value="P:nuclear DNA replication"/>
    <property type="evidence" value="ECO:0000318"/>
    <property type="project" value="GO_Central"/>
</dbReference>
<dbReference type="InterPro" id="IPR040050">
    <property type="entry name" value="ZNF830-like"/>
</dbReference>
<dbReference type="InterPro" id="IPR036236">
    <property type="entry name" value="Znf_C2H2_sf"/>
</dbReference>
<dbReference type="PANTHER" id="PTHR13278">
    <property type="entry name" value="ZINC FINGER PROTEIN 830"/>
    <property type="match status" value="1"/>
</dbReference>
<dbReference type="PANTHER" id="PTHR13278:SF0">
    <property type="entry name" value="ZINC FINGER PROTEIN 830"/>
    <property type="match status" value="1"/>
</dbReference>
<dbReference type="Pfam" id="PF23406">
    <property type="entry name" value="ZNF380_CC"/>
    <property type="match status" value="1"/>
</dbReference>
<dbReference type="SUPFAM" id="SSF57667">
    <property type="entry name" value="beta-beta-alpha zinc fingers"/>
    <property type="match status" value="1"/>
</dbReference>
<dbReference type="PROSITE" id="PS00028">
    <property type="entry name" value="ZINC_FINGER_C2H2_1"/>
    <property type="match status" value="1"/>
</dbReference>
<sequence length="356" mass="40336">MAVPGKKKLVAQEELRKLMKAKQRESSSKKRIESPLAKYNSLGHLSCVVCNSLIKSELLWPAHILGKQHKEKVAELKGTKATTSSPSNTIEYPRITKRKGSEPEKQESKRTKGSEDHPSASTTKLPEEFFEKEKTSSAGNAPSLKLLAGDYEDVDDDDAEEGEEYENAKEASSSLLKPAEIPLPPPTSSADNLPADFFENKMPLVSHSGSVLKADIQEKIVERKENTAEALPEGFFDDPEVDAKVRKVDAPKDQMDKEWEEFQKEIRQVNTVSEAIVAEEDEEGRLDRQIDEIDEQIQCYRRVEHLRDRKDTLQDAKMEVLKSKSNEKWQDEIGSDDEEKLPSLLYQNWREKGAFH</sequence>